<protein>
    <recommendedName>
        <fullName>Histone-lysine N-methyltransferase SUV39H2</fullName>
        <ecNumber>2.1.1.355</ecNumber>
    </recommendedName>
    <alternativeName>
        <fullName>Histone H3-K9 methyltransferase 2</fullName>
        <shortName>H3-K9-HMTase 2</shortName>
    </alternativeName>
    <alternativeName>
        <fullName>Lysine N-methyltransferase 1B</fullName>
    </alternativeName>
    <alternativeName>
        <fullName>Suppressor of variegation 3-9 homolog 2</fullName>
        <shortName>Su(var)3-9 homolog 2</shortName>
    </alternativeName>
</protein>
<keyword id="KW-0002">3D-structure</keyword>
<keyword id="KW-0025">Alternative splicing</keyword>
<keyword id="KW-0090">Biological rhythms</keyword>
<keyword id="KW-0131">Cell cycle</keyword>
<keyword id="KW-0137">Centromere</keyword>
<keyword id="KW-0156">Chromatin regulator</keyword>
<keyword id="KW-0158">Chromosome</keyword>
<keyword id="KW-0221">Differentiation</keyword>
<keyword id="KW-0479">Metal-binding</keyword>
<keyword id="KW-0489">Methyltransferase</keyword>
<keyword id="KW-0539">Nucleus</keyword>
<keyword id="KW-0597">Phosphoprotein</keyword>
<keyword id="KW-1267">Proteomics identification</keyword>
<keyword id="KW-1185">Reference proteome</keyword>
<keyword id="KW-0678">Repressor</keyword>
<keyword id="KW-0949">S-adenosyl-L-methionine</keyword>
<keyword id="KW-0804">Transcription</keyword>
<keyword id="KW-0805">Transcription regulation</keyword>
<keyword id="KW-0808">Transferase</keyword>
<keyword id="KW-0832">Ubl conjugation</keyword>
<keyword id="KW-0862">Zinc</keyword>
<gene>
    <name type="primary">SUV39H2</name>
    <name type="synonym">KMT1B</name>
</gene>
<comment type="function">
    <text evidence="7">Histone methyltransferase that specifically trimethylates 'Lys-9' of histone H3 using monomethylated H3 'Lys-9' as substrate. H3 'Lys-9' trimethylation represents a specific tag for epigenetic transcriptional repression by recruiting HP1 (CBX1, CBX3 and/or CBX5) proteins to methylated histones. Mainly functions in heterochromatin regions, thereby playing a central role in the establishment of constitutive heterochromatin at pericentric and telomere regions. H3 'Lys-9' trimethylation is also required to direct DNA methylation at pericentric repeats. SUV39H1 is targeted to histone H3 via its interaction with RB1 and is involved in many processes, such as cell cycle regulation, transcriptional repression and regulation of telomere length. May participate in regulation of higher-order chromatin organization during spermatogenesis. Recruited by the large PER complex to the E-box elements of the circadian target genes such as PER2 itself or PER1, contributes to the conversion of local chromatin to a heterochromatin-like repressive state through H3 'Lys-9' trimethylation.</text>
</comment>
<comment type="catalytic activity">
    <reaction evidence="6">
        <text>L-lysyl(9)-[histone H3] + 3 S-adenosyl-L-methionine = N(6),N(6),N(6)-trimethyl-L-lysyl(9)-[histone H3] + 3 S-adenosyl-L-homocysteine + 3 H(+)</text>
        <dbReference type="Rhea" id="RHEA:60276"/>
        <dbReference type="Rhea" id="RHEA-COMP:15538"/>
        <dbReference type="Rhea" id="RHEA-COMP:15546"/>
        <dbReference type="ChEBI" id="CHEBI:15378"/>
        <dbReference type="ChEBI" id="CHEBI:29969"/>
        <dbReference type="ChEBI" id="CHEBI:57856"/>
        <dbReference type="ChEBI" id="CHEBI:59789"/>
        <dbReference type="ChEBI" id="CHEBI:61961"/>
        <dbReference type="EC" id="2.1.1.355"/>
    </reaction>
</comment>
<comment type="subunit">
    <text evidence="8 10">Interacts with SMAD5. The large PER complex involved in the histone methylation is composed of at least PER2, CBX3, TRIM28, SUV39H1 and/or SUV39H2; CBX3 mediates the formation of the complex.</text>
</comment>
<comment type="interaction">
    <interactant intactId="EBI-723127">
        <id>Q9H5I1</id>
    </interactant>
    <interactant intactId="EBI-741261">
        <id>Q8NEU8</id>
        <label>APPL2</label>
    </interactant>
    <organismsDiffer>false</organismsDiffer>
    <experiments>6</experiments>
</comment>
<comment type="interaction">
    <interactant intactId="EBI-723127">
        <id>Q9H5I1</id>
    </interactant>
    <interactant intactId="EBI-1773949">
        <id>Q9BXL8</id>
        <label>CDCA4</label>
    </interactant>
    <organismsDiffer>false</organismsDiffer>
    <experiments>2</experiments>
</comment>
<comment type="interaction">
    <interactant intactId="EBI-723127">
        <id>Q9H5I1</id>
    </interactant>
    <interactant intactId="EBI-10183977">
        <id>V9HWG0</id>
        <label>HEL25</label>
    </interactant>
    <organismsDiffer>false</organismsDiffer>
    <experiments>3</experiments>
</comment>
<comment type="interaction">
    <interactant intactId="EBI-723127">
        <id>Q9H5I1</id>
    </interactant>
    <interactant intactId="EBI-743960">
        <id>Q8N5Z5</id>
        <label>KCTD17</label>
    </interactant>
    <organismsDiffer>false</organismsDiffer>
    <experiments>2</experiments>
</comment>
<comment type="interaction">
    <interactant intactId="EBI-723127">
        <id>Q9H5I1</id>
    </interactant>
    <interactant intactId="EBI-8472352">
        <id>Q8TBB5</id>
        <label>KLHDC4</label>
    </interactant>
    <organismsDiffer>false</organismsDiffer>
    <experiments>2</experiments>
</comment>
<comment type="interaction">
    <interactant intactId="EBI-723127">
        <id>Q9H5I1</id>
    </interactant>
    <interactant intactId="EBI-995714">
        <id>Q9Y605</id>
        <label>MRFAP1</label>
    </interactant>
    <organismsDiffer>false</organismsDiffer>
    <experiments>2</experiments>
</comment>
<comment type="interaction">
    <interactant intactId="EBI-723127">
        <id>Q9H5I1</id>
    </interactant>
    <interactant intactId="EBI-389883">
        <id>P16333</id>
        <label>NCK1</label>
    </interactant>
    <organismsDiffer>false</organismsDiffer>
    <experiments>2</experiments>
</comment>
<comment type="interaction">
    <interactant intactId="EBI-723127">
        <id>Q9H5I1</id>
    </interactant>
    <interactant intactId="EBI-2339674">
        <id>Q5T6S3</id>
        <label>PHF19</label>
    </interactant>
    <organismsDiffer>false</organismsDiffer>
    <experiments>2</experiments>
</comment>
<comment type="interaction">
    <interactant intactId="EBI-723127">
        <id>Q9H5I1</id>
    </interactant>
    <interactant intactId="EBI-302345">
        <id>Q8ND90</id>
        <label>PNMA1</label>
    </interactant>
    <organismsDiffer>false</organismsDiffer>
    <experiments>5</experiments>
</comment>
<comment type="interaction">
    <interactant intactId="EBI-723127">
        <id>Q9H5I1</id>
    </interactant>
    <interactant intactId="EBI-1640204">
        <id>Q9UDV6</id>
        <label>ZNF212</label>
    </interactant>
    <organismsDiffer>false</organismsDiffer>
    <experiments>2</experiments>
</comment>
<comment type="interaction">
    <interactant intactId="EBI-11977575">
        <id>Q9H5I1-2</id>
    </interactant>
    <interactant intactId="EBI-741261">
        <id>Q8NEU8</id>
        <label>APPL2</label>
    </interactant>
    <organismsDiffer>false</organismsDiffer>
    <experiments>3</experiments>
</comment>
<comment type="interaction">
    <interactant intactId="EBI-11977575">
        <id>Q9H5I1-2</id>
    </interactant>
    <interactant intactId="EBI-5916454">
        <id>A6NEM1</id>
        <label>GOLGA6L9</label>
    </interactant>
    <organismsDiffer>false</organismsDiffer>
    <experiments>3</experiments>
</comment>
<comment type="subcellular location">
    <subcellularLocation>
        <location evidence="11">Nucleus</location>
    </subcellularLocation>
    <subcellularLocation>
        <location evidence="1">Chromosome</location>
        <location evidence="1">Centromere</location>
    </subcellularLocation>
    <text evidence="1">Associates with centromeric constitutive heterochromatin.</text>
</comment>
<comment type="alternative products">
    <event type="alternative splicing"/>
    <isoform>
        <id>Q9H5I1-1</id>
        <name>3</name>
        <sequence type="displayed"/>
    </isoform>
    <isoform>
        <id>Q9H5I1-2</id>
        <name>1</name>
        <sequence type="described" ref="VSP_002209"/>
    </isoform>
    <isoform>
        <id>Q9H5I1-3</id>
        <name>2</name>
        <sequence type="described" ref="VSP_002210"/>
    </isoform>
</comment>
<comment type="domain">
    <text evidence="1">Although the SET domain contains the active site of enzymatic activity, both pre-SET and post-SET domains are required for methyltransferase activity. The SET domain also participates in stable binding to heterochromatin (By similarity).</text>
</comment>
<comment type="domain">
    <text>In the pre-SET domain, Cys residues bind 3 zinc ions that are arranged in a triangular cluster; some of these Cys residues contribute to the binding of two zinc ions within the cluster.</text>
</comment>
<comment type="PTM">
    <text evidence="11">Ubiquitinated by the DCX(DCAF13) E3 ubiquitin ligase complex, leading to its degradation.</text>
</comment>
<comment type="similarity">
    <text evidence="6">Belongs to the class V-like SAM-binding methyltransferase superfamily. Histone-lysine methyltransferase family. Suvar3-9 subfamily.</text>
</comment>
<dbReference type="EC" id="2.1.1.355"/>
<dbReference type="EMBL" id="AK027067">
    <property type="protein sequence ID" value="BAB15645.1"/>
    <property type="molecule type" value="mRNA"/>
</dbReference>
<dbReference type="EMBL" id="CR457372">
    <property type="protein sequence ID" value="CAG33653.1"/>
    <property type="molecule type" value="mRNA"/>
</dbReference>
<dbReference type="EMBL" id="AC069544">
    <property type="status" value="NOT_ANNOTATED_CDS"/>
    <property type="molecule type" value="Genomic_DNA"/>
</dbReference>
<dbReference type="EMBL" id="AL360083">
    <property type="status" value="NOT_ANNOTATED_CDS"/>
    <property type="molecule type" value="Genomic_DNA"/>
</dbReference>
<dbReference type="EMBL" id="CH471072">
    <property type="protein sequence ID" value="EAW86254.1"/>
    <property type="molecule type" value="Genomic_DNA"/>
</dbReference>
<dbReference type="EMBL" id="CH471072">
    <property type="protein sequence ID" value="EAW86253.1"/>
    <property type="molecule type" value="Genomic_DNA"/>
</dbReference>
<dbReference type="EMBL" id="CH471072">
    <property type="protein sequence ID" value="EAW86255.1"/>
    <property type="molecule type" value="Genomic_DNA"/>
</dbReference>
<dbReference type="EMBL" id="CH471072">
    <property type="protein sequence ID" value="EAW86256.1"/>
    <property type="molecule type" value="Genomic_DNA"/>
</dbReference>
<dbReference type="EMBL" id="BC007754">
    <property type="protein sequence ID" value="AAH07754.1"/>
    <property type="molecule type" value="mRNA"/>
</dbReference>
<dbReference type="EMBL" id="BC029360">
    <property type="protein sequence ID" value="AAH29360.1"/>
    <property type="molecule type" value="mRNA"/>
</dbReference>
<dbReference type="EMBL" id="AL834488">
    <property type="protein sequence ID" value="CAD39146.1"/>
    <property type="molecule type" value="mRNA"/>
</dbReference>
<dbReference type="CCDS" id="CCDS53493.1">
    <molecule id="Q9H5I1-3"/>
</dbReference>
<dbReference type="CCDS" id="CCDS53494.1">
    <molecule id="Q9H5I1-1"/>
</dbReference>
<dbReference type="CCDS" id="CCDS7104.1">
    <molecule id="Q9H5I1-2"/>
</dbReference>
<dbReference type="RefSeq" id="NP_001180353.1">
    <molecule id="Q9H5I1-1"/>
    <property type="nucleotide sequence ID" value="NM_001193424.2"/>
</dbReference>
<dbReference type="RefSeq" id="NP_001180354.1">
    <molecule id="Q9H5I1-2"/>
    <property type="nucleotide sequence ID" value="NM_001193425.2"/>
</dbReference>
<dbReference type="RefSeq" id="NP_001180355.1">
    <molecule id="Q9H5I1-3"/>
    <property type="nucleotide sequence ID" value="NM_001193426.2"/>
</dbReference>
<dbReference type="RefSeq" id="NP_001180356.1">
    <property type="nucleotide sequence ID" value="NM_001193427.1"/>
</dbReference>
<dbReference type="RefSeq" id="NP_078946.1">
    <molecule id="Q9H5I1-2"/>
    <property type="nucleotide sequence ID" value="NM_024670.4"/>
</dbReference>
<dbReference type="RefSeq" id="XP_006717566.1">
    <property type="nucleotide sequence ID" value="XM_006717503.3"/>
</dbReference>
<dbReference type="RefSeq" id="XP_011517964.1">
    <molecule id="Q9H5I1-2"/>
    <property type="nucleotide sequence ID" value="XM_011519662.3"/>
</dbReference>
<dbReference type="RefSeq" id="XP_016872126.1">
    <property type="nucleotide sequence ID" value="XM_017016637.1"/>
</dbReference>
<dbReference type="RefSeq" id="XP_047281697.1">
    <molecule id="Q9H5I1-2"/>
    <property type="nucleotide sequence ID" value="XM_047425741.1"/>
</dbReference>
<dbReference type="RefSeq" id="XP_054222708.1">
    <molecule id="Q9H5I1-2"/>
    <property type="nucleotide sequence ID" value="XM_054366733.1"/>
</dbReference>
<dbReference type="PDB" id="2R3A">
    <property type="method" value="X-ray"/>
    <property type="resolution" value="2.00 A"/>
    <property type="chains" value="A=112-410"/>
</dbReference>
<dbReference type="PDB" id="6P0R">
    <property type="method" value="X-ray"/>
    <property type="resolution" value="2.40 A"/>
    <property type="chains" value="A/B=112-410"/>
</dbReference>
<dbReference type="PDBsum" id="2R3A"/>
<dbReference type="PDBsum" id="6P0R"/>
<dbReference type="SMR" id="Q9H5I1"/>
<dbReference type="BioGRID" id="122838">
    <property type="interactions" value="83"/>
</dbReference>
<dbReference type="FunCoup" id="Q9H5I1">
    <property type="interactions" value="2885"/>
</dbReference>
<dbReference type="IntAct" id="Q9H5I1">
    <property type="interactions" value="75"/>
</dbReference>
<dbReference type="MINT" id="Q9H5I1"/>
<dbReference type="STRING" id="9606.ENSP00000346997"/>
<dbReference type="BindingDB" id="Q9H5I1"/>
<dbReference type="ChEMBL" id="CHEMBL1795177"/>
<dbReference type="GuidetoPHARMACOLOGY" id="2716"/>
<dbReference type="GlyGen" id="Q9H5I1">
    <property type="glycosylation" value="1 site, 1 O-linked glycan (1 site)"/>
</dbReference>
<dbReference type="iPTMnet" id="Q9H5I1"/>
<dbReference type="PhosphoSitePlus" id="Q9H5I1"/>
<dbReference type="BioMuta" id="SUV39H2"/>
<dbReference type="DMDM" id="25091325"/>
<dbReference type="jPOST" id="Q9H5I1"/>
<dbReference type="MassIVE" id="Q9H5I1"/>
<dbReference type="PaxDb" id="9606-ENSP00000346997"/>
<dbReference type="PeptideAtlas" id="Q9H5I1"/>
<dbReference type="ProteomicsDB" id="80906">
    <molecule id="Q9H5I1-1"/>
</dbReference>
<dbReference type="ProteomicsDB" id="80907">
    <molecule id="Q9H5I1-2"/>
</dbReference>
<dbReference type="ProteomicsDB" id="80908">
    <molecule id="Q9H5I1-3"/>
</dbReference>
<dbReference type="Pumba" id="Q9H5I1"/>
<dbReference type="Antibodypedia" id="24975">
    <property type="antibodies" value="374 antibodies from 36 providers"/>
</dbReference>
<dbReference type="DNASU" id="79723"/>
<dbReference type="Ensembl" id="ENST00000313519.9">
    <molecule id="Q9H5I1-2"/>
    <property type="protein sequence ID" value="ENSP00000319208.5"/>
    <property type="gene ID" value="ENSG00000152455.16"/>
</dbReference>
<dbReference type="Ensembl" id="ENST00000354919.11">
    <molecule id="Q9H5I1-1"/>
    <property type="protein sequence ID" value="ENSP00000346997.6"/>
    <property type="gene ID" value="ENSG00000152455.16"/>
</dbReference>
<dbReference type="Ensembl" id="ENST00000378325.7">
    <molecule id="Q9H5I1-3"/>
    <property type="protein sequence ID" value="ENSP00000367576.3"/>
    <property type="gene ID" value="ENSG00000152455.16"/>
</dbReference>
<dbReference type="GeneID" id="79723"/>
<dbReference type="KEGG" id="hsa:79723"/>
<dbReference type="MANE-Select" id="ENST00000354919.11">
    <property type="protein sequence ID" value="ENSP00000346997.6"/>
    <property type="RefSeq nucleotide sequence ID" value="NM_001193424.2"/>
    <property type="RefSeq protein sequence ID" value="NP_001180353.1"/>
</dbReference>
<dbReference type="UCSC" id="uc001ing.4">
    <molecule id="Q9H5I1-1"/>
    <property type="organism name" value="human"/>
</dbReference>
<dbReference type="AGR" id="HGNC:17287"/>
<dbReference type="CTD" id="79723"/>
<dbReference type="DisGeNET" id="79723"/>
<dbReference type="GeneCards" id="SUV39H2"/>
<dbReference type="HGNC" id="HGNC:17287">
    <property type="gene designation" value="SUV39H2"/>
</dbReference>
<dbReference type="HPA" id="ENSG00000152455">
    <property type="expression patterns" value="Tissue enriched (testis)"/>
</dbReference>
<dbReference type="MIM" id="606503">
    <property type="type" value="gene"/>
</dbReference>
<dbReference type="neXtProt" id="NX_Q9H5I1"/>
<dbReference type="OpenTargets" id="ENSG00000152455"/>
<dbReference type="PharmGKB" id="PA134868807"/>
<dbReference type="VEuPathDB" id="HostDB:ENSG00000152455"/>
<dbReference type="eggNOG" id="KOG1082">
    <property type="taxonomic scope" value="Eukaryota"/>
</dbReference>
<dbReference type="GeneTree" id="ENSGT00940000156788"/>
<dbReference type="HOGENOM" id="CLU_020840_8_0_1"/>
<dbReference type="InParanoid" id="Q9H5I1"/>
<dbReference type="OMA" id="CPEEAGF"/>
<dbReference type="OrthoDB" id="308383at2759"/>
<dbReference type="PAN-GO" id="Q9H5I1">
    <property type="GO annotations" value="3 GO annotations based on evolutionary models"/>
</dbReference>
<dbReference type="PhylomeDB" id="Q9H5I1"/>
<dbReference type="TreeFam" id="TF106452"/>
<dbReference type="BioCyc" id="MetaCyc:HS07820-MONOMER"/>
<dbReference type="PathwayCommons" id="Q9H5I1"/>
<dbReference type="Reactome" id="R-HSA-3214841">
    <property type="pathway name" value="PKMTs methylate histone lysines"/>
</dbReference>
<dbReference type="SignaLink" id="Q9H5I1"/>
<dbReference type="BioGRID-ORCS" id="79723">
    <property type="hits" value="15 hits in 1173 CRISPR screens"/>
</dbReference>
<dbReference type="ChiTaRS" id="SUV39H2">
    <property type="organism name" value="human"/>
</dbReference>
<dbReference type="EvolutionaryTrace" id="Q9H5I1"/>
<dbReference type="GeneWiki" id="SUV39H2"/>
<dbReference type="GenomeRNAi" id="79723"/>
<dbReference type="Pharos" id="Q9H5I1">
    <property type="development level" value="Tchem"/>
</dbReference>
<dbReference type="PRO" id="PR:Q9H5I1"/>
<dbReference type="Proteomes" id="UP000005640">
    <property type="component" value="Chromosome 10"/>
</dbReference>
<dbReference type="RNAct" id="Q9H5I1">
    <property type="molecule type" value="protein"/>
</dbReference>
<dbReference type="Bgee" id="ENSG00000152455">
    <property type="expression patterns" value="Expressed in sperm and 135 other cell types or tissues"/>
</dbReference>
<dbReference type="ExpressionAtlas" id="Q9H5I1">
    <property type="expression patterns" value="baseline and differential"/>
</dbReference>
<dbReference type="GO" id="GO:0000785">
    <property type="term" value="C:chromatin"/>
    <property type="evidence" value="ECO:0000314"/>
    <property type="project" value="UniProtKB"/>
</dbReference>
<dbReference type="GO" id="GO:0000775">
    <property type="term" value="C:chromosome, centromeric region"/>
    <property type="evidence" value="ECO:0007669"/>
    <property type="project" value="UniProtKB-SubCell"/>
</dbReference>
<dbReference type="GO" id="GO:0005654">
    <property type="term" value="C:nucleoplasm"/>
    <property type="evidence" value="ECO:0000304"/>
    <property type="project" value="Reactome"/>
</dbReference>
<dbReference type="GO" id="GO:0005634">
    <property type="term" value="C:nucleus"/>
    <property type="evidence" value="ECO:0000314"/>
    <property type="project" value="UniProt"/>
</dbReference>
<dbReference type="GO" id="GO:0140938">
    <property type="term" value="F:histone H3 methyltransferase activity"/>
    <property type="evidence" value="ECO:0000304"/>
    <property type="project" value="Reactome"/>
</dbReference>
<dbReference type="GO" id="GO:0046974">
    <property type="term" value="F:histone H3K9 methyltransferase activity"/>
    <property type="evidence" value="ECO:0000314"/>
    <property type="project" value="UniProtKB"/>
</dbReference>
<dbReference type="GO" id="GO:0140949">
    <property type="term" value="F:histone H3K9 trimethyltransferase activity"/>
    <property type="evidence" value="ECO:0007669"/>
    <property type="project" value="UniProtKB-EC"/>
</dbReference>
<dbReference type="GO" id="GO:1904047">
    <property type="term" value="F:S-adenosyl-L-methionine binding"/>
    <property type="evidence" value="ECO:0000314"/>
    <property type="project" value="UniProtKB"/>
</dbReference>
<dbReference type="GO" id="GO:0000976">
    <property type="term" value="F:transcription cis-regulatory region binding"/>
    <property type="evidence" value="ECO:0000250"/>
    <property type="project" value="UniProtKB"/>
</dbReference>
<dbReference type="GO" id="GO:1990756">
    <property type="term" value="F:ubiquitin-like ligase-substrate adaptor activity"/>
    <property type="evidence" value="ECO:0000314"/>
    <property type="project" value="UniProt"/>
</dbReference>
<dbReference type="GO" id="GO:0008270">
    <property type="term" value="F:zinc ion binding"/>
    <property type="evidence" value="ECO:0000314"/>
    <property type="project" value="UniProtKB"/>
</dbReference>
<dbReference type="GO" id="GO:0030154">
    <property type="term" value="P:cell differentiation"/>
    <property type="evidence" value="ECO:0007669"/>
    <property type="project" value="UniProtKB-KW"/>
</dbReference>
<dbReference type="GO" id="GO:0071456">
    <property type="term" value="P:cellular response to hypoxia"/>
    <property type="evidence" value="ECO:0000314"/>
    <property type="project" value="MGI"/>
</dbReference>
<dbReference type="GO" id="GO:0006325">
    <property type="term" value="P:chromatin organization"/>
    <property type="evidence" value="ECO:0000315"/>
    <property type="project" value="UniProtKB"/>
</dbReference>
<dbReference type="GO" id="GO:0006338">
    <property type="term" value="P:chromatin remodeling"/>
    <property type="evidence" value="ECO:0000314"/>
    <property type="project" value="UniProtKB"/>
</dbReference>
<dbReference type="GO" id="GO:0007623">
    <property type="term" value="P:circadian rhythm"/>
    <property type="evidence" value="ECO:0000250"/>
    <property type="project" value="UniProtKB"/>
</dbReference>
<dbReference type="GO" id="GO:0044725">
    <property type="term" value="P:epigenetic programming in the zygotic pronuclei"/>
    <property type="evidence" value="ECO:0000314"/>
    <property type="project" value="UniProt"/>
</dbReference>
<dbReference type="GO" id="GO:0032259">
    <property type="term" value="P:methylation"/>
    <property type="evidence" value="ECO:0007669"/>
    <property type="project" value="UniProtKB-KW"/>
</dbReference>
<dbReference type="GO" id="GO:0045892">
    <property type="term" value="P:negative regulation of DNA-templated transcription"/>
    <property type="evidence" value="ECO:0000250"/>
    <property type="project" value="UniProtKB"/>
</dbReference>
<dbReference type="GO" id="GO:0045814">
    <property type="term" value="P:negative regulation of gene expression, epigenetic"/>
    <property type="evidence" value="ECO:0000250"/>
    <property type="project" value="UniProtKB"/>
</dbReference>
<dbReference type="GO" id="GO:0000122">
    <property type="term" value="P:negative regulation of transcription by RNA polymerase II"/>
    <property type="evidence" value="ECO:0000315"/>
    <property type="project" value="MGI"/>
</dbReference>
<dbReference type="CDD" id="cd18639">
    <property type="entry name" value="CD_SUV39H1_like"/>
    <property type="match status" value="1"/>
</dbReference>
<dbReference type="CDD" id="cd10532">
    <property type="entry name" value="SET_SUV39H2"/>
    <property type="match status" value="1"/>
</dbReference>
<dbReference type="DisProt" id="DP02654"/>
<dbReference type="FunFam" id="2.170.270.10:FF:000008">
    <property type="entry name" value="Histone-lysine N-methyltransferase"/>
    <property type="match status" value="1"/>
</dbReference>
<dbReference type="FunFam" id="2.40.50.40:FF:000016">
    <property type="entry name" value="Histone-lysine N-methyltransferase"/>
    <property type="match status" value="1"/>
</dbReference>
<dbReference type="Gene3D" id="2.40.50.40">
    <property type="match status" value="1"/>
</dbReference>
<dbReference type="Gene3D" id="2.170.270.10">
    <property type="entry name" value="SET domain"/>
    <property type="match status" value="1"/>
</dbReference>
<dbReference type="IDEAL" id="IID00498"/>
<dbReference type="InterPro" id="IPR016197">
    <property type="entry name" value="Chromo-like_dom_sf"/>
</dbReference>
<dbReference type="InterPro" id="IPR000953">
    <property type="entry name" value="Chromo/chromo_shadow_dom"/>
</dbReference>
<dbReference type="InterPro" id="IPR023780">
    <property type="entry name" value="Chromo_domain"/>
</dbReference>
<dbReference type="InterPro" id="IPR023779">
    <property type="entry name" value="Chromodomain_CS"/>
</dbReference>
<dbReference type="InterPro" id="IPR011381">
    <property type="entry name" value="H3-K9_MeTrfase_SUV39H1/2-like"/>
</dbReference>
<dbReference type="InterPro" id="IPR050973">
    <property type="entry name" value="H3K9_Histone-Lys_N-MTase"/>
</dbReference>
<dbReference type="InterPro" id="IPR003616">
    <property type="entry name" value="Post-SET_dom"/>
</dbReference>
<dbReference type="InterPro" id="IPR007728">
    <property type="entry name" value="Pre-SET_dom"/>
</dbReference>
<dbReference type="InterPro" id="IPR001214">
    <property type="entry name" value="SET_dom"/>
</dbReference>
<dbReference type="InterPro" id="IPR046341">
    <property type="entry name" value="SET_dom_sf"/>
</dbReference>
<dbReference type="PANTHER" id="PTHR46223">
    <property type="entry name" value="HISTONE-LYSINE N-METHYLTRANSFERASE SUV39H"/>
    <property type="match status" value="1"/>
</dbReference>
<dbReference type="PANTHER" id="PTHR46223:SF2">
    <property type="entry name" value="HISTONE-LYSINE N-METHYLTRANSFERASE SUV39H2"/>
    <property type="match status" value="1"/>
</dbReference>
<dbReference type="Pfam" id="PF00385">
    <property type="entry name" value="Chromo"/>
    <property type="match status" value="1"/>
</dbReference>
<dbReference type="Pfam" id="PF05033">
    <property type="entry name" value="Pre-SET"/>
    <property type="match status" value="1"/>
</dbReference>
<dbReference type="Pfam" id="PF00856">
    <property type="entry name" value="SET"/>
    <property type="match status" value="1"/>
</dbReference>
<dbReference type="PIRSF" id="PIRSF009343">
    <property type="entry name" value="SUV39_SET"/>
    <property type="match status" value="1"/>
</dbReference>
<dbReference type="SMART" id="SM00298">
    <property type="entry name" value="CHROMO"/>
    <property type="match status" value="1"/>
</dbReference>
<dbReference type="SMART" id="SM00508">
    <property type="entry name" value="PostSET"/>
    <property type="match status" value="1"/>
</dbReference>
<dbReference type="SMART" id="SM00468">
    <property type="entry name" value="PreSET"/>
    <property type="match status" value="1"/>
</dbReference>
<dbReference type="SMART" id="SM00317">
    <property type="entry name" value="SET"/>
    <property type="match status" value="1"/>
</dbReference>
<dbReference type="SUPFAM" id="SSF54160">
    <property type="entry name" value="Chromo domain-like"/>
    <property type="match status" value="1"/>
</dbReference>
<dbReference type="SUPFAM" id="SSF82199">
    <property type="entry name" value="SET domain"/>
    <property type="match status" value="1"/>
</dbReference>
<dbReference type="PROSITE" id="PS00598">
    <property type="entry name" value="CHROMO_1"/>
    <property type="match status" value="1"/>
</dbReference>
<dbReference type="PROSITE" id="PS50013">
    <property type="entry name" value="CHROMO_2"/>
    <property type="match status" value="1"/>
</dbReference>
<dbReference type="PROSITE" id="PS50868">
    <property type="entry name" value="POST_SET"/>
    <property type="match status" value="1"/>
</dbReference>
<dbReference type="PROSITE" id="PS50867">
    <property type="entry name" value="PRE_SET"/>
    <property type="match status" value="1"/>
</dbReference>
<dbReference type="PROSITE" id="PS51579">
    <property type="entry name" value="SAM_MT43_SUVAR39_3"/>
    <property type="match status" value="1"/>
</dbReference>
<dbReference type="PROSITE" id="PS50280">
    <property type="entry name" value="SET"/>
    <property type="match status" value="1"/>
</dbReference>
<evidence type="ECO:0000250" key="1"/>
<evidence type="ECO:0000255" key="2">
    <source>
        <dbReference type="PROSITE-ProRule" id="PRU00053"/>
    </source>
</evidence>
<evidence type="ECO:0000255" key="3">
    <source>
        <dbReference type="PROSITE-ProRule" id="PRU00155"/>
    </source>
</evidence>
<evidence type="ECO:0000255" key="4">
    <source>
        <dbReference type="PROSITE-ProRule" id="PRU00157"/>
    </source>
</evidence>
<evidence type="ECO:0000255" key="5">
    <source>
        <dbReference type="PROSITE-ProRule" id="PRU00190"/>
    </source>
</evidence>
<evidence type="ECO:0000255" key="6">
    <source>
        <dbReference type="PROSITE-ProRule" id="PRU00912"/>
    </source>
</evidence>
<evidence type="ECO:0000269" key="7">
    <source>
    </source>
</evidence>
<evidence type="ECO:0000269" key="8">
    <source>
    </source>
</evidence>
<evidence type="ECO:0000269" key="9">
    <source>
    </source>
</evidence>
<evidence type="ECO:0000269" key="10">
    <source>
    </source>
</evidence>
<evidence type="ECO:0000269" key="11">
    <source>
    </source>
</evidence>
<evidence type="ECO:0000303" key="12">
    <source>
    </source>
</evidence>
<evidence type="ECO:0000303" key="13">
    <source>
    </source>
</evidence>
<evidence type="ECO:0000303" key="14">
    <source ref="2"/>
</evidence>
<evidence type="ECO:0007744" key="15">
    <source>
        <dbReference type="PDB" id="2R3A"/>
    </source>
</evidence>
<evidence type="ECO:0007744" key="16">
    <source>
    </source>
</evidence>
<evidence type="ECO:0007744" key="17">
    <source>
    </source>
</evidence>
<evidence type="ECO:0007744" key="18">
    <source>
    </source>
</evidence>
<evidence type="ECO:0007829" key="19">
    <source>
        <dbReference type="PDB" id="2R3A"/>
    </source>
</evidence>
<evidence type="ECO:0007829" key="20">
    <source>
        <dbReference type="PDB" id="6P0R"/>
    </source>
</evidence>
<accession>Q9H5I1</accession>
<accession>D3DRT4</accession>
<accession>Q5JSS4</accession>
<accession>Q5JSS5</accession>
<accession>Q6I9Y3</accession>
<accession>Q8ND06</accession>
<sequence>MAAVGAEARGAWCVPCLVSLDTLQELCRKEKLTCKSIGITKRNLNNYEVEYLCDYKVVKDMEYYLVKWKGWPDSTNTWEPLQNLKCPLLLQQFSNDKHNYLSQVKKGKAITPKDNNKTLKPAIAEYIVKKAKQRIALQRWQDELNRRKNHKGMIFVENTVDLEGPPSDFYYINEYKPAPGISLVNEATFGCSCTDCFFQKCCPAEAGVLLAYNKNQQIKIPPGTPIYECNSRCQCGPDCPNRIVQKGTQYSLCIFRTSNGRGWGVKTLVKIKRMSFVMEYVGEVITSEEAERRGQFYDNKGITYLFDLDYESDEFTVDAARYGNVSHFVNHSCDPNLQVFNVFIDNLDTRLPRIALFSTRTINAGEELTFDYQMKGSGDISSDSIDHSPAKKRVRTVCKCGAVTCRGYLN</sequence>
<reference key="1">
    <citation type="journal article" date="2004" name="Nat. Genet.">
        <title>Complete sequencing and characterization of 21,243 full-length human cDNAs.</title>
        <authorList>
            <person name="Ota T."/>
            <person name="Suzuki Y."/>
            <person name="Nishikawa T."/>
            <person name="Otsuki T."/>
            <person name="Sugiyama T."/>
            <person name="Irie R."/>
            <person name="Wakamatsu A."/>
            <person name="Hayashi K."/>
            <person name="Sato H."/>
            <person name="Nagai K."/>
            <person name="Kimura K."/>
            <person name="Makita H."/>
            <person name="Sekine M."/>
            <person name="Obayashi M."/>
            <person name="Nishi T."/>
            <person name="Shibahara T."/>
            <person name="Tanaka T."/>
            <person name="Ishii S."/>
            <person name="Yamamoto J."/>
            <person name="Saito K."/>
            <person name="Kawai Y."/>
            <person name="Isono Y."/>
            <person name="Nakamura Y."/>
            <person name="Nagahari K."/>
            <person name="Murakami K."/>
            <person name="Yasuda T."/>
            <person name="Iwayanagi T."/>
            <person name="Wagatsuma M."/>
            <person name="Shiratori A."/>
            <person name="Sudo H."/>
            <person name="Hosoiri T."/>
            <person name="Kaku Y."/>
            <person name="Kodaira H."/>
            <person name="Kondo H."/>
            <person name="Sugawara M."/>
            <person name="Takahashi M."/>
            <person name="Kanda K."/>
            <person name="Yokoi T."/>
            <person name="Furuya T."/>
            <person name="Kikkawa E."/>
            <person name="Omura Y."/>
            <person name="Abe K."/>
            <person name="Kamihara K."/>
            <person name="Katsuta N."/>
            <person name="Sato K."/>
            <person name="Tanikawa M."/>
            <person name="Yamazaki M."/>
            <person name="Ninomiya K."/>
            <person name="Ishibashi T."/>
            <person name="Yamashita H."/>
            <person name="Murakawa K."/>
            <person name="Fujimori K."/>
            <person name="Tanai H."/>
            <person name="Kimata M."/>
            <person name="Watanabe M."/>
            <person name="Hiraoka S."/>
            <person name="Chiba Y."/>
            <person name="Ishida S."/>
            <person name="Ono Y."/>
            <person name="Takiguchi S."/>
            <person name="Watanabe S."/>
            <person name="Yosida M."/>
            <person name="Hotuta T."/>
            <person name="Kusano J."/>
            <person name="Kanehori K."/>
            <person name="Takahashi-Fujii A."/>
            <person name="Hara H."/>
            <person name="Tanase T.-O."/>
            <person name="Nomura Y."/>
            <person name="Togiya S."/>
            <person name="Komai F."/>
            <person name="Hara R."/>
            <person name="Takeuchi K."/>
            <person name="Arita M."/>
            <person name="Imose N."/>
            <person name="Musashino K."/>
            <person name="Yuuki H."/>
            <person name="Oshima A."/>
            <person name="Sasaki N."/>
            <person name="Aotsuka S."/>
            <person name="Yoshikawa Y."/>
            <person name="Matsunawa H."/>
            <person name="Ichihara T."/>
            <person name="Shiohata N."/>
            <person name="Sano S."/>
            <person name="Moriya S."/>
            <person name="Momiyama H."/>
            <person name="Satoh N."/>
            <person name="Takami S."/>
            <person name="Terashima Y."/>
            <person name="Suzuki O."/>
            <person name="Nakagawa S."/>
            <person name="Senoh A."/>
            <person name="Mizoguchi H."/>
            <person name="Goto Y."/>
            <person name="Shimizu F."/>
            <person name="Wakebe H."/>
            <person name="Hishigaki H."/>
            <person name="Watanabe T."/>
            <person name="Sugiyama A."/>
            <person name="Takemoto M."/>
            <person name="Kawakami B."/>
            <person name="Yamazaki M."/>
            <person name="Watanabe K."/>
            <person name="Kumagai A."/>
            <person name="Itakura S."/>
            <person name="Fukuzumi Y."/>
            <person name="Fujimori Y."/>
            <person name="Komiyama M."/>
            <person name="Tashiro H."/>
            <person name="Tanigami A."/>
            <person name="Fujiwara T."/>
            <person name="Ono T."/>
            <person name="Yamada K."/>
            <person name="Fujii Y."/>
            <person name="Ozaki K."/>
            <person name="Hirao M."/>
            <person name="Ohmori Y."/>
            <person name="Kawabata A."/>
            <person name="Hikiji T."/>
            <person name="Kobatake N."/>
            <person name="Inagaki H."/>
            <person name="Ikema Y."/>
            <person name="Okamoto S."/>
            <person name="Okitani R."/>
            <person name="Kawakami T."/>
            <person name="Noguchi S."/>
            <person name="Itoh T."/>
            <person name="Shigeta K."/>
            <person name="Senba T."/>
            <person name="Matsumura K."/>
            <person name="Nakajima Y."/>
            <person name="Mizuno T."/>
            <person name="Morinaga M."/>
            <person name="Sasaki M."/>
            <person name="Togashi T."/>
            <person name="Oyama M."/>
            <person name="Hata H."/>
            <person name="Watanabe M."/>
            <person name="Komatsu T."/>
            <person name="Mizushima-Sugano J."/>
            <person name="Satoh T."/>
            <person name="Shirai Y."/>
            <person name="Takahashi Y."/>
            <person name="Nakagawa K."/>
            <person name="Okumura K."/>
            <person name="Nagase T."/>
            <person name="Nomura N."/>
            <person name="Kikuchi H."/>
            <person name="Masuho Y."/>
            <person name="Yamashita R."/>
            <person name="Nakai K."/>
            <person name="Yada T."/>
            <person name="Nakamura Y."/>
            <person name="Ohara O."/>
            <person name="Isogai T."/>
            <person name="Sugano S."/>
        </authorList>
    </citation>
    <scope>NUCLEOTIDE SEQUENCE [LARGE SCALE MRNA] (ISOFORM 1)</scope>
</reference>
<reference key="2">
    <citation type="submission" date="2004-06" db="EMBL/GenBank/DDBJ databases">
        <title>Cloning of human full open reading frames in Gateway(TM) system entry vector (pDONR201).</title>
        <authorList>
            <person name="Ebert L."/>
            <person name="Schick M."/>
            <person name="Neubert P."/>
            <person name="Schatten R."/>
            <person name="Henze S."/>
            <person name="Korn B."/>
        </authorList>
    </citation>
    <scope>NUCLEOTIDE SEQUENCE [LARGE SCALE MRNA] (ISOFORM 1)</scope>
</reference>
<reference key="3">
    <citation type="journal article" date="2004" name="Nature">
        <title>The DNA sequence and comparative analysis of human chromosome 10.</title>
        <authorList>
            <person name="Deloukas P."/>
            <person name="Earthrowl M.E."/>
            <person name="Grafham D.V."/>
            <person name="Rubenfield M."/>
            <person name="French L."/>
            <person name="Steward C.A."/>
            <person name="Sims S.K."/>
            <person name="Jones M.C."/>
            <person name="Searle S."/>
            <person name="Scott C."/>
            <person name="Howe K."/>
            <person name="Hunt S.E."/>
            <person name="Andrews T.D."/>
            <person name="Gilbert J.G.R."/>
            <person name="Swarbreck D."/>
            <person name="Ashurst J.L."/>
            <person name="Taylor A."/>
            <person name="Battles J."/>
            <person name="Bird C.P."/>
            <person name="Ainscough R."/>
            <person name="Almeida J.P."/>
            <person name="Ashwell R.I.S."/>
            <person name="Ambrose K.D."/>
            <person name="Babbage A.K."/>
            <person name="Bagguley C.L."/>
            <person name="Bailey J."/>
            <person name="Banerjee R."/>
            <person name="Bates K."/>
            <person name="Beasley H."/>
            <person name="Bray-Allen S."/>
            <person name="Brown A.J."/>
            <person name="Brown J.Y."/>
            <person name="Burford D.C."/>
            <person name="Burrill W."/>
            <person name="Burton J."/>
            <person name="Cahill P."/>
            <person name="Camire D."/>
            <person name="Carter N.P."/>
            <person name="Chapman J.C."/>
            <person name="Clark S.Y."/>
            <person name="Clarke G."/>
            <person name="Clee C.M."/>
            <person name="Clegg S."/>
            <person name="Corby N."/>
            <person name="Coulson A."/>
            <person name="Dhami P."/>
            <person name="Dutta I."/>
            <person name="Dunn M."/>
            <person name="Faulkner L."/>
            <person name="Frankish A."/>
            <person name="Frankland J.A."/>
            <person name="Garner P."/>
            <person name="Garnett J."/>
            <person name="Gribble S."/>
            <person name="Griffiths C."/>
            <person name="Grocock R."/>
            <person name="Gustafson E."/>
            <person name="Hammond S."/>
            <person name="Harley J.L."/>
            <person name="Hart E."/>
            <person name="Heath P.D."/>
            <person name="Ho T.P."/>
            <person name="Hopkins B."/>
            <person name="Horne J."/>
            <person name="Howden P.J."/>
            <person name="Huckle E."/>
            <person name="Hynds C."/>
            <person name="Johnson C."/>
            <person name="Johnson D."/>
            <person name="Kana A."/>
            <person name="Kay M."/>
            <person name="Kimberley A.M."/>
            <person name="Kershaw J.K."/>
            <person name="Kokkinaki M."/>
            <person name="Laird G.K."/>
            <person name="Lawlor S."/>
            <person name="Lee H.M."/>
            <person name="Leongamornlert D.A."/>
            <person name="Laird G."/>
            <person name="Lloyd C."/>
            <person name="Lloyd D.M."/>
            <person name="Loveland J."/>
            <person name="Lovell J."/>
            <person name="McLaren S."/>
            <person name="McLay K.E."/>
            <person name="McMurray A."/>
            <person name="Mashreghi-Mohammadi M."/>
            <person name="Matthews L."/>
            <person name="Milne S."/>
            <person name="Nickerson T."/>
            <person name="Nguyen M."/>
            <person name="Overton-Larty E."/>
            <person name="Palmer S.A."/>
            <person name="Pearce A.V."/>
            <person name="Peck A.I."/>
            <person name="Pelan S."/>
            <person name="Phillimore B."/>
            <person name="Porter K."/>
            <person name="Rice C.M."/>
            <person name="Rogosin A."/>
            <person name="Ross M.T."/>
            <person name="Sarafidou T."/>
            <person name="Sehra H.K."/>
            <person name="Shownkeen R."/>
            <person name="Skuce C.D."/>
            <person name="Smith M."/>
            <person name="Standring L."/>
            <person name="Sycamore N."/>
            <person name="Tester J."/>
            <person name="Thorpe A."/>
            <person name="Torcasso W."/>
            <person name="Tracey A."/>
            <person name="Tromans A."/>
            <person name="Tsolas J."/>
            <person name="Wall M."/>
            <person name="Walsh J."/>
            <person name="Wang H."/>
            <person name="Weinstock K."/>
            <person name="West A.P."/>
            <person name="Willey D.L."/>
            <person name="Whitehead S.L."/>
            <person name="Wilming L."/>
            <person name="Wray P.W."/>
            <person name="Young L."/>
            <person name="Chen Y."/>
            <person name="Lovering R.C."/>
            <person name="Moschonas N.K."/>
            <person name="Siebert R."/>
            <person name="Fechtel K."/>
            <person name="Bentley D."/>
            <person name="Durbin R.M."/>
            <person name="Hubbard T."/>
            <person name="Doucette-Stamm L."/>
            <person name="Beck S."/>
            <person name="Smith D.R."/>
            <person name="Rogers J."/>
        </authorList>
    </citation>
    <scope>NUCLEOTIDE SEQUENCE [LARGE SCALE GENOMIC DNA]</scope>
</reference>
<reference key="4">
    <citation type="submission" date="2005-09" db="EMBL/GenBank/DDBJ databases">
        <authorList>
            <person name="Mural R.J."/>
            <person name="Istrail S."/>
            <person name="Sutton G.G."/>
            <person name="Florea L."/>
            <person name="Halpern A.L."/>
            <person name="Mobarry C.M."/>
            <person name="Lippert R."/>
            <person name="Walenz B."/>
            <person name="Shatkay H."/>
            <person name="Dew I."/>
            <person name="Miller J.R."/>
            <person name="Flanigan M.J."/>
            <person name="Edwards N.J."/>
            <person name="Bolanos R."/>
            <person name="Fasulo D."/>
            <person name="Halldorsson B.V."/>
            <person name="Hannenhalli S."/>
            <person name="Turner R."/>
            <person name="Yooseph S."/>
            <person name="Lu F."/>
            <person name="Nusskern D.R."/>
            <person name="Shue B.C."/>
            <person name="Zheng X.H."/>
            <person name="Zhong F."/>
            <person name="Delcher A.L."/>
            <person name="Huson D.H."/>
            <person name="Kravitz S.A."/>
            <person name="Mouchard L."/>
            <person name="Reinert K."/>
            <person name="Remington K.A."/>
            <person name="Clark A.G."/>
            <person name="Waterman M.S."/>
            <person name="Eichler E.E."/>
            <person name="Adams M.D."/>
            <person name="Hunkapiller M.W."/>
            <person name="Myers E.W."/>
            <person name="Venter J.C."/>
        </authorList>
    </citation>
    <scope>NUCLEOTIDE SEQUENCE [LARGE SCALE GENOMIC DNA]</scope>
</reference>
<reference key="5">
    <citation type="journal article" date="2004" name="Genome Res.">
        <title>The status, quality, and expansion of the NIH full-length cDNA project: the Mammalian Gene Collection (MGC).</title>
        <authorList>
            <consortium name="The MGC Project Team"/>
        </authorList>
    </citation>
    <scope>NUCLEOTIDE SEQUENCE [LARGE SCALE MRNA] (ISOFORMS 1 AND 2)</scope>
    <source>
        <tissue>Bone marrow</tissue>
        <tissue>Muscle</tissue>
    </source>
</reference>
<reference key="6">
    <citation type="journal article" date="2007" name="BMC Genomics">
        <title>The full-ORF clone resource of the German cDNA consortium.</title>
        <authorList>
            <person name="Bechtel S."/>
            <person name="Rosenfelder H."/>
            <person name="Duda A."/>
            <person name="Schmidt C.P."/>
            <person name="Ernst U."/>
            <person name="Wellenreuther R."/>
            <person name="Mehrle A."/>
            <person name="Schuster C."/>
            <person name="Bahr A."/>
            <person name="Bloecker H."/>
            <person name="Heubner D."/>
            <person name="Hoerlein A."/>
            <person name="Michel G."/>
            <person name="Wedler H."/>
            <person name="Koehrer K."/>
            <person name="Ottenwaelder B."/>
            <person name="Poustka A."/>
            <person name="Wiemann S."/>
            <person name="Schupp I."/>
        </authorList>
    </citation>
    <scope>NUCLEOTIDE SEQUENCE [LARGE SCALE MRNA] OF 96-410</scope>
    <source>
        <tissue>Testis</tissue>
    </source>
</reference>
<reference key="7">
    <citation type="journal article" date="2004" name="EMBO J.">
        <title>A Suv39h-dependent mechanism for silencing S-phase genes in differentiating but not in cycling cells.</title>
        <authorList>
            <person name="Ait-Si-Ali S."/>
            <person name="Guasconi V."/>
            <person name="Fritsch L."/>
            <person name="Yahi H."/>
            <person name="Sekhri R."/>
            <person name="Naguibneva I."/>
            <person name="Robin P."/>
            <person name="Cabon F."/>
            <person name="Polesskaya A."/>
            <person name="Harel-Bellan A."/>
        </authorList>
    </citation>
    <scope>FUNCTION</scope>
</reference>
<reference key="8">
    <citation type="journal article" date="2004" name="Oncogene">
        <title>Suv39h histone methyltransferases interact with Smads and cooperate in BMP-induced repression.</title>
        <authorList>
            <person name="Frontelo P."/>
            <person name="Leader J.E."/>
            <person name="Yoo N."/>
            <person name="Potocki A.C."/>
            <person name="Crawford M."/>
            <person name="Kulik M."/>
            <person name="Lechleider R.J."/>
        </authorList>
    </citation>
    <scope>INTERACTION WITH SMAD5</scope>
</reference>
<reference key="9">
    <citation type="journal article" date="2008" name="Proc. Natl. Acad. Sci. U.S.A.">
        <title>A quantitative atlas of mitotic phosphorylation.</title>
        <authorList>
            <person name="Dephoure N."/>
            <person name="Zhou C."/>
            <person name="Villen J."/>
            <person name="Beausoleil S.A."/>
            <person name="Bakalarski C.E."/>
            <person name="Elledge S.J."/>
            <person name="Gygi S.P."/>
        </authorList>
    </citation>
    <scope>PHOSPHORYLATION [LARGE SCALE ANALYSIS] AT SER-384 AND SER-388</scope>
    <scope>IDENTIFICATION BY MASS SPECTROMETRY [LARGE SCALE ANALYSIS]</scope>
    <source>
        <tissue>Cervix carcinoma</tissue>
    </source>
</reference>
<reference key="10">
    <citation type="journal article" date="2009" name="Anal. Chem.">
        <title>Lys-N and trypsin cover complementary parts of the phosphoproteome in a refined SCX-based approach.</title>
        <authorList>
            <person name="Gauci S."/>
            <person name="Helbig A.O."/>
            <person name="Slijper M."/>
            <person name="Krijgsveld J."/>
            <person name="Heck A.J."/>
            <person name="Mohammed S."/>
        </authorList>
    </citation>
    <scope>IDENTIFICATION BY MASS SPECTROMETRY [LARGE SCALE ANALYSIS]</scope>
</reference>
<reference key="11">
    <citation type="journal article" date="2011" name="Sci. Signal.">
        <title>System-wide temporal characterization of the proteome and phosphoproteome of human embryonic stem cell differentiation.</title>
        <authorList>
            <person name="Rigbolt K.T."/>
            <person name="Prokhorova T.A."/>
            <person name="Akimov V."/>
            <person name="Henningsen J."/>
            <person name="Johansen P.T."/>
            <person name="Kratchmarova I."/>
            <person name="Kassem M."/>
            <person name="Mann M."/>
            <person name="Olsen J.V."/>
            <person name="Blagoev B."/>
        </authorList>
    </citation>
    <scope>PHOSPHORYLATION [LARGE SCALE ANALYSIS] AT SER-381; SER-384 AND SER-388</scope>
    <scope>IDENTIFICATION BY MASS SPECTROMETRY [LARGE SCALE ANALYSIS]</scope>
</reference>
<reference key="12">
    <citation type="journal article" date="2013" name="J. Proteome Res.">
        <title>Toward a comprehensive characterization of a human cancer cell phosphoproteome.</title>
        <authorList>
            <person name="Zhou H."/>
            <person name="Di Palma S."/>
            <person name="Preisinger C."/>
            <person name="Peng M."/>
            <person name="Polat A.N."/>
            <person name="Heck A.J."/>
            <person name="Mohammed S."/>
        </authorList>
    </citation>
    <scope>PHOSPHORYLATION [LARGE SCALE ANALYSIS] AT SER-381; SER-384 AND SER-388</scope>
    <scope>IDENTIFICATION BY MASS SPECTROMETRY [LARGE SCALE ANALYSIS]</scope>
    <source>
        <tissue>Cervix carcinoma</tissue>
        <tissue>Erythroleukemia</tissue>
    </source>
</reference>
<reference key="13">
    <citation type="journal article" date="2018" name="EMBO J.">
        <title>DCAF13 promotes pluripotency by negatively regulating SUV39H1 stability during early embryonic development.</title>
        <authorList>
            <person name="Zhang Y.L."/>
            <person name="Zhao L.W."/>
            <person name="Zhang J."/>
            <person name="Le R."/>
            <person name="Ji S.Y."/>
            <person name="Chen C."/>
            <person name="Gao Y."/>
            <person name="Li D."/>
            <person name="Gao S."/>
            <person name="Fan H.Y."/>
        </authorList>
    </citation>
    <scope>SUBCELLULAR LOCATION</scope>
    <scope>UBIQUITINATION</scope>
</reference>
<reference key="14">
    <citation type="journal article" date="2010" name="PLoS ONE">
        <title>Structural biology of human H3K9 methyltransferases.</title>
        <authorList>
            <person name="Wu H."/>
            <person name="Min J."/>
            <person name="Lunin V.V."/>
            <person name="Antoshenko T."/>
            <person name="Dombrovski L."/>
            <person name="Zeng H."/>
            <person name="Allali-Hassani A."/>
            <person name="Campagna-Slater V."/>
            <person name="Vedadi M."/>
            <person name="Arrowsmith C.H."/>
            <person name="Plotnikov A.N."/>
            <person name="Schapira M."/>
        </authorList>
    </citation>
    <scope>X-RAY CRYSTALLOGRAPHY (2.00 ANGSTROMS) OF 112-410 IN COMPLEX WITH S-ADENOSYL-L-METHIONINE AND ZINC IONS</scope>
</reference>
<reference key="15">
    <citation type="journal article" date="2006" name="Science">
        <title>The consensus coding sequences of human breast and colorectal cancers.</title>
        <authorList>
            <person name="Sjoeblom T."/>
            <person name="Jones S."/>
            <person name="Wood L.D."/>
            <person name="Parsons D.W."/>
            <person name="Lin J."/>
            <person name="Barber T.D."/>
            <person name="Mandelker D."/>
            <person name="Leary R.J."/>
            <person name="Ptak J."/>
            <person name="Silliman N."/>
            <person name="Szabo S."/>
            <person name="Buckhaults P."/>
            <person name="Farrell C."/>
            <person name="Meeh P."/>
            <person name="Markowitz S.D."/>
            <person name="Willis J."/>
            <person name="Dawson D."/>
            <person name="Willson J.K.V."/>
            <person name="Gazdar A.F."/>
            <person name="Hartigan J."/>
            <person name="Wu L."/>
            <person name="Liu C."/>
            <person name="Parmigiani G."/>
            <person name="Park B.H."/>
            <person name="Bachman K.E."/>
            <person name="Papadopoulos N."/>
            <person name="Vogelstein B."/>
            <person name="Kinzler K.W."/>
            <person name="Velculescu V.E."/>
        </authorList>
    </citation>
    <scope>VARIANT [LARGE SCALE ANALYSIS] HIS-383</scope>
</reference>
<name>SUV92_HUMAN</name>
<organism>
    <name type="scientific">Homo sapiens</name>
    <name type="common">Human</name>
    <dbReference type="NCBI Taxonomy" id="9606"/>
    <lineage>
        <taxon>Eukaryota</taxon>
        <taxon>Metazoa</taxon>
        <taxon>Chordata</taxon>
        <taxon>Craniata</taxon>
        <taxon>Vertebrata</taxon>
        <taxon>Euteleostomi</taxon>
        <taxon>Mammalia</taxon>
        <taxon>Eutheria</taxon>
        <taxon>Euarchontoglires</taxon>
        <taxon>Primates</taxon>
        <taxon>Haplorrhini</taxon>
        <taxon>Catarrhini</taxon>
        <taxon>Hominidae</taxon>
        <taxon>Homo</taxon>
    </lineage>
</organism>
<feature type="chain" id="PRO_0000186059" description="Histone-lysine N-methyltransferase SUV39H2">
    <location>
        <begin position="1"/>
        <end position="410"/>
    </location>
</feature>
<feature type="domain" description="Chromo" evidence="2">
    <location>
        <begin position="47"/>
        <end position="105"/>
    </location>
</feature>
<feature type="domain" description="Pre-SET" evidence="4">
    <location>
        <begin position="189"/>
        <end position="247"/>
    </location>
</feature>
<feature type="domain" description="SET" evidence="5">
    <location>
        <begin position="250"/>
        <end position="373"/>
    </location>
</feature>
<feature type="domain" description="Post-SET" evidence="3">
    <location>
        <begin position="394"/>
        <end position="410"/>
    </location>
</feature>
<feature type="binding site" evidence="10 15">
    <location>
        <position position="191"/>
    </location>
    <ligand>
        <name>Zn(2+)</name>
        <dbReference type="ChEBI" id="CHEBI:29105"/>
        <label>1</label>
    </ligand>
</feature>
<feature type="binding site" evidence="10 15">
    <location>
        <position position="191"/>
    </location>
    <ligand>
        <name>Zn(2+)</name>
        <dbReference type="ChEBI" id="CHEBI:29105"/>
        <label>2</label>
    </ligand>
</feature>
<feature type="binding site" evidence="10 15">
    <location>
        <position position="193"/>
    </location>
    <ligand>
        <name>Zn(2+)</name>
        <dbReference type="ChEBI" id="CHEBI:29105"/>
        <label>1</label>
    </ligand>
</feature>
<feature type="binding site" evidence="10 15">
    <location>
        <position position="196"/>
    </location>
    <ligand>
        <name>Zn(2+)</name>
        <dbReference type="ChEBI" id="CHEBI:29105"/>
        <label>1</label>
    </ligand>
</feature>
<feature type="binding site" evidence="10 15">
    <location>
        <position position="196"/>
    </location>
    <ligand>
        <name>Zn(2+)</name>
        <dbReference type="ChEBI" id="CHEBI:29105"/>
        <label>3</label>
    </ligand>
</feature>
<feature type="binding site" evidence="10 15">
    <location>
        <position position="201"/>
    </location>
    <ligand>
        <name>Zn(2+)</name>
        <dbReference type="ChEBI" id="CHEBI:29105"/>
        <label>1</label>
    </ligand>
</feature>
<feature type="binding site" evidence="10 15">
    <location>
        <position position="202"/>
    </location>
    <ligand>
        <name>Zn(2+)</name>
        <dbReference type="ChEBI" id="CHEBI:29105"/>
        <label>2</label>
    </ligand>
</feature>
<feature type="binding site" evidence="10 15">
    <location>
        <position position="229"/>
    </location>
    <ligand>
        <name>Zn(2+)</name>
        <dbReference type="ChEBI" id="CHEBI:29105"/>
        <label>2</label>
    </ligand>
</feature>
<feature type="binding site" evidence="10 15">
    <location>
        <position position="229"/>
    </location>
    <ligand>
        <name>Zn(2+)</name>
        <dbReference type="ChEBI" id="CHEBI:29105"/>
        <label>3</label>
    </ligand>
</feature>
<feature type="binding site" evidence="10 15">
    <location>
        <position position="233"/>
    </location>
    <ligand>
        <name>Zn(2+)</name>
        <dbReference type="ChEBI" id="CHEBI:29105"/>
        <label>2</label>
    </ligand>
</feature>
<feature type="binding site" evidence="10 15">
    <location>
        <position position="235"/>
    </location>
    <ligand>
        <name>Zn(2+)</name>
        <dbReference type="ChEBI" id="CHEBI:29105"/>
        <label>3</label>
    </ligand>
</feature>
<feature type="binding site" evidence="10 15">
    <location>
        <position position="239"/>
    </location>
    <ligand>
        <name>Zn(2+)</name>
        <dbReference type="ChEBI" id="CHEBI:29105"/>
        <label>3</label>
    </ligand>
</feature>
<feature type="binding site" evidence="10 15">
    <location>
        <begin position="261"/>
        <end position="263"/>
    </location>
    <ligand>
        <name>S-adenosyl-L-methionine</name>
        <dbReference type="ChEBI" id="CHEBI:59789"/>
    </ligand>
</feature>
<feature type="binding site" evidence="10 15">
    <location>
        <begin position="330"/>
        <end position="331"/>
    </location>
    <ligand>
        <name>S-adenosyl-L-methionine</name>
        <dbReference type="ChEBI" id="CHEBI:59789"/>
    </ligand>
</feature>
<feature type="binding site" evidence="10 15">
    <location>
        <position position="333"/>
    </location>
    <ligand>
        <name>Zn(2+)</name>
        <dbReference type="ChEBI" id="CHEBI:29105"/>
        <label>4</label>
    </ligand>
</feature>
<feature type="binding site" evidence="5">
    <location>
        <position position="372"/>
    </location>
    <ligand>
        <name>S-adenosyl-L-methionine</name>
        <dbReference type="ChEBI" id="CHEBI:59789"/>
    </ligand>
</feature>
<feature type="binding site" evidence="10 15">
    <location>
        <position position="398"/>
    </location>
    <ligand>
        <name>Zn(2+)</name>
        <dbReference type="ChEBI" id="CHEBI:29105"/>
        <label>4</label>
    </ligand>
</feature>
<feature type="binding site" evidence="10 15">
    <location>
        <position position="399"/>
    </location>
    <ligand>
        <name>S-adenosyl-L-methionine</name>
        <dbReference type="ChEBI" id="CHEBI:59789"/>
    </ligand>
</feature>
<feature type="binding site" evidence="10 15">
    <location>
        <position position="400"/>
    </location>
    <ligand>
        <name>Zn(2+)</name>
        <dbReference type="ChEBI" id="CHEBI:29105"/>
        <label>4</label>
    </ligand>
</feature>
<feature type="binding site" evidence="10 15">
    <location>
        <position position="405"/>
    </location>
    <ligand>
        <name>Zn(2+)</name>
        <dbReference type="ChEBI" id="CHEBI:29105"/>
        <label>4</label>
    </ligand>
</feature>
<feature type="modified residue" description="Phosphoserine" evidence="17 18">
    <location>
        <position position="381"/>
    </location>
</feature>
<feature type="modified residue" description="Phosphoserine" evidence="16 17 18">
    <location>
        <position position="384"/>
    </location>
</feature>
<feature type="modified residue" description="Phosphoserine" evidence="16 17 18">
    <location>
        <position position="388"/>
    </location>
</feature>
<feature type="splice variant" id="VSP_002209" description="In isoform 1." evidence="12 13 14">
    <location>
        <begin position="1"/>
        <end position="60"/>
    </location>
</feature>
<feature type="splice variant" id="VSP_002210" description="In isoform 2." evidence="13">
    <location>
        <begin position="104"/>
        <end position="283"/>
    </location>
</feature>
<feature type="sequence variant" id="VAR_036344" description="In a breast cancer sample; somatic mutation." evidence="9">
    <original>D</original>
    <variation>H</variation>
    <location>
        <position position="383"/>
    </location>
</feature>
<feature type="helix" evidence="19">
    <location>
        <begin position="125"/>
        <end position="147"/>
    </location>
</feature>
<feature type="strand" evidence="19">
    <location>
        <begin position="150"/>
        <end position="152"/>
    </location>
</feature>
<feature type="strand" evidence="19">
    <location>
        <begin position="154"/>
        <end position="157"/>
    </location>
</feature>
<feature type="strand" evidence="19">
    <location>
        <begin position="159"/>
        <end position="161"/>
    </location>
</feature>
<feature type="turn" evidence="19">
    <location>
        <begin position="196"/>
        <end position="198"/>
    </location>
</feature>
<feature type="helix" evidence="19">
    <location>
        <begin position="202"/>
        <end position="205"/>
    </location>
</feature>
<feature type="strand" evidence="20">
    <location>
        <begin position="216"/>
        <end position="218"/>
    </location>
</feature>
<feature type="helix" evidence="19">
    <location>
        <begin position="244"/>
        <end position="246"/>
    </location>
</feature>
<feature type="strand" evidence="19">
    <location>
        <begin position="252"/>
        <end position="256"/>
    </location>
</feature>
<feature type="strand" evidence="19">
    <location>
        <begin position="258"/>
        <end position="260"/>
    </location>
</feature>
<feature type="strand" evidence="19">
    <location>
        <begin position="263"/>
        <end position="269"/>
    </location>
</feature>
<feature type="strand" evidence="19">
    <location>
        <begin position="276"/>
        <end position="280"/>
    </location>
</feature>
<feature type="strand" evidence="19">
    <location>
        <begin position="283"/>
        <end position="286"/>
    </location>
</feature>
<feature type="helix" evidence="19">
    <location>
        <begin position="287"/>
        <end position="295"/>
    </location>
</feature>
<feature type="helix" evidence="19">
    <location>
        <begin position="299"/>
        <end position="303"/>
    </location>
</feature>
<feature type="strand" evidence="19">
    <location>
        <begin position="305"/>
        <end position="307"/>
    </location>
</feature>
<feature type="turn" evidence="20">
    <location>
        <begin position="309"/>
        <end position="311"/>
    </location>
</feature>
<feature type="strand" evidence="19">
    <location>
        <begin position="313"/>
        <end position="318"/>
    </location>
</feature>
<feature type="strand" evidence="19">
    <location>
        <begin position="320"/>
        <end position="323"/>
    </location>
</feature>
<feature type="helix" evidence="19">
    <location>
        <begin position="325"/>
        <end position="328"/>
    </location>
</feature>
<feature type="strand" evidence="19">
    <location>
        <begin position="336"/>
        <end position="345"/>
    </location>
</feature>
<feature type="strand" evidence="19">
    <location>
        <begin position="353"/>
        <end position="360"/>
    </location>
</feature>
<feature type="strand" evidence="19">
    <location>
        <begin position="367"/>
        <end position="370"/>
    </location>
</feature>
<feature type="helix" evidence="19">
    <location>
        <begin position="372"/>
        <end position="374"/>
    </location>
</feature>
<proteinExistence type="evidence at protein level"/>